<keyword id="KW-0369">Histidine metabolism</keyword>
<keyword id="KW-0378">Hydrolase</keyword>
<keyword id="KW-0464">Manganese</keyword>
<keyword id="KW-0479">Metal-binding</keyword>
<dbReference type="EC" id="3.5.3.8" evidence="1"/>
<dbReference type="EMBL" id="AP006716">
    <property type="protein sequence ID" value="BAE04032.1"/>
    <property type="molecule type" value="Genomic_DNA"/>
</dbReference>
<dbReference type="RefSeq" id="WP_011275047.1">
    <property type="nucleotide sequence ID" value="NC_007168.1"/>
</dbReference>
<dbReference type="SMR" id="Q4L8J3"/>
<dbReference type="GeneID" id="93780116"/>
<dbReference type="KEGG" id="sha:SH0723"/>
<dbReference type="eggNOG" id="COG0010">
    <property type="taxonomic scope" value="Bacteria"/>
</dbReference>
<dbReference type="HOGENOM" id="CLU_039478_2_0_9"/>
<dbReference type="OrthoDB" id="9788689at2"/>
<dbReference type="UniPathway" id="UPA00379">
    <property type="reaction ID" value="UER00552"/>
</dbReference>
<dbReference type="Proteomes" id="UP000000543">
    <property type="component" value="Chromosome"/>
</dbReference>
<dbReference type="GO" id="GO:0008783">
    <property type="term" value="F:agmatinase activity"/>
    <property type="evidence" value="ECO:0007669"/>
    <property type="project" value="TreeGrafter"/>
</dbReference>
<dbReference type="GO" id="GO:0050415">
    <property type="term" value="F:formimidoylglutamase activity"/>
    <property type="evidence" value="ECO:0007669"/>
    <property type="project" value="UniProtKB-UniRule"/>
</dbReference>
<dbReference type="GO" id="GO:0030145">
    <property type="term" value="F:manganese ion binding"/>
    <property type="evidence" value="ECO:0007669"/>
    <property type="project" value="UniProtKB-UniRule"/>
</dbReference>
<dbReference type="GO" id="GO:0019556">
    <property type="term" value="P:L-histidine catabolic process to glutamate and formamide"/>
    <property type="evidence" value="ECO:0007669"/>
    <property type="project" value="UniProtKB-UniPathway"/>
</dbReference>
<dbReference type="GO" id="GO:0019557">
    <property type="term" value="P:L-histidine catabolic process to glutamate and formate"/>
    <property type="evidence" value="ECO:0007669"/>
    <property type="project" value="UniProtKB-UniPathway"/>
</dbReference>
<dbReference type="GO" id="GO:0033389">
    <property type="term" value="P:putrescine biosynthetic process from arginine, via agmatine"/>
    <property type="evidence" value="ECO:0007669"/>
    <property type="project" value="TreeGrafter"/>
</dbReference>
<dbReference type="CDD" id="cd09988">
    <property type="entry name" value="Formimidoylglutamase"/>
    <property type="match status" value="1"/>
</dbReference>
<dbReference type="Gene3D" id="3.40.800.10">
    <property type="entry name" value="Ureohydrolase domain"/>
    <property type="match status" value="1"/>
</dbReference>
<dbReference type="HAMAP" id="MF_00737">
    <property type="entry name" value="Formimidoylglutam"/>
    <property type="match status" value="1"/>
</dbReference>
<dbReference type="InterPro" id="IPR005923">
    <property type="entry name" value="HutG"/>
</dbReference>
<dbReference type="InterPro" id="IPR006035">
    <property type="entry name" value="Ureohydrolase"/>
</dbReference>
<dbReference type="InterPro" id="IPR023696">
    <property type="entry name" value="Ureohydrolase_dom_sf"/>
</dbReference>
<dbReference type="NCBIfam" id="TIGR01227">
    <property type="entry name" value="hutG"/>
    <property type="match status" value="1"/>
</dbReference>
<dbReference type="PANTHER" id="PTHR11358">
    <property type="entry name" value="ARGINASE/AGMATINASE"/>
    <property type="match status" value="1"/>
</dbReference>
<dbReference type="PANTHER" id="PTHR11358:SF35">
    <property type="entry name" value="FORMIMIDOYLGLUTAMASE"/>
    <property type="match status" value="1"/>
</dbReference>
<dbReference type="Pfam" id="PF00491">
    <property type="entry name" value="Arginase"/>
    <property type="match status" value="1"/>
</dbReference>
<dbReference type="PIRSF" id="PIRSF036979">
    <property type="entry name" value="Arginase"/>
    <property type="match status" value="1"/>
</dbReference>
<dbReference type="SUPFAM" id="SSF52768">
    <property type="entry name" value="Arginase/deacetylase"/>
    <property type="match status" value="1"/>
</dbReference>
<dbReference type="PROSITE" id="PS51409">
    <property type="entry name" value="ARGINASE_2"/>
    <property type="match status" value="1"/>
</dbReference>
<sequence length="311" mass="34905">MYTQGNPKLWTGRLDSETDPKQFRHFQTVKFANLENMENVSDKTGVGLLGYAVDKGVENNKGRIGSRKGPDIIKHEFAKLPDLSECEMLIDYGNVEHTSNHLRETQQEMARLSAKVIKQHKQAFLIGGGHDIAYAQYLATREVYSDASIGIINIDAHFDTRPDEPPTSGTMFREILDNDENVDYLVLGLAQGGNTRALYDYAKDNNIIYVYADELLHQVSPTIKDKIERFIHDHDTIMFTICMDVIDSAFAPGVSSPSVLGLYPHSVFEISKRVILSDKVSSISIAETNPDYDVDNRTSKLAANLIHHFLV</sequence>
<reference key="1">
    <citation type="journal article" date="2005" name="J. Bacteriol.">
        <title>Whole-genome sequencing of Staphylococcus haemolyticus uncovers the extreme plasticity of its genome and the evolution of human-colonizing staphylococcal species.</title>
        <authorList>
            <person name="Takeuchi F."/>
            <person name="Watanabe S."/>
            <person name="Baba T."/>
            <person name="Yuzawa H."/>
            <person name="Ito T."/>
            <person name="Morimoto Y."/>
            <person name="Kuroda M."/>
            <person name="Cui L."/>
            <person name="Takahashi M."/>
            <person name="Ankai A."/>
            <person name="Baba S."/>
            <person name="Fukui S."/>
            <person name="Lee J.C."/>
            <person name="Hiramatsu K."/>
        </authorList>
    </citation>
    <scope>NUCLEOTIDE SEQUENCE [LARGE SCALE GENOMIC DNA]</scope>
    <source>
        <strain>JCSC1435</strain>
    </source>
</reference>
<accession>Q4L8J3</accession>
<name>HUTG_STAHJ</name>
<protein>
    <recommendedName>
        <fullName evidence="1">Formimidoylglutamase</fullName>
        <ecNumber evidence="1">3.5.3.8</ecNumber>
    </recommendedName>
    <alternativeName>
        <fullName evidence="1">Formiminoglutamase</fullName>
    </alternativeName>
    <alternativeName>
        <fullName evidence="1">Formiminoglutamate hydrolase</fullName>
    </alternativeName>
</protein>
<organism>
    <name type="scientific">Staphylococcus haemolyticus (strain JCSC1435)</name>
    <dbReference type="NCBI Taxonomy" id="279808"/>
    <lineage>
        <taxon>Bacteria</taxon>
        <taxon>Bacillati</taxon>
        <taxon>Bacillota</taxon>
        <taxon>Bacilli</taxon>
        <taxon>Bacillales</taxon>
        <taxon>Staphylococcaceae</taxon>
        <taxon>Staphylococcus</taxon>
    </lineage>
</organism>
<proteinExistence type="inferred from homology"/>
<comment type="function">
    <text evidence="1">Catalyzes the conversion of N-formimidoyl-L-glutamate to L-glutamate and formamide.</text>
</comment>
<comment type="catalytic activity">
    <reaction evidence="1">
        <text>N-formimidoyl-L-glutamate + H2O = formamide + L-glutamate</text>
        <dbReference type="Rhea" id="RHEA:22492"/>
        <dbReference type="ChEBI" id="CHEBI:15377"/>
        <dbReference type="ChEBI" id="CHEBI:16397"/>
        <dbReference type="ChEBI" id="CHEBI:29985"/>
        <dbReference type="ChEBI" id="CHEBI:58928"/>
        <dbReference type="EC" id="3.5.3.8"/>
    </reaction>
</comment>
<comment type="cofactor">
    <cofactor evidence="1">
        <name>Mn(2+)</name>
        <dbReference type="ChEBI" id="CHEBI:29035"/>
    </cofactor>
    <text evidence="1">Binds 2 manganese ions per subunit.</text>
</comment>
<comment type="pathway">
    <text evidence="1">Amino-acid degradation; L-histidine degradation into L-glutamate; L-glutamate from N-formimidoyl-L-glutamate (hydrolase route): step 1/1.</text>
</comment>
<comment type="similarity">
    <text evidence="1">Belongs to the arginase family.</text>
</comment>
<evidence type="ECO:0000255" key="1">
    <source>
        <dbReference type="HAMAP-Rule" id="MF_00737"/>
    </source>
</evidence>
<gene>
    <name evidence="1" type="primary">hutG</name>
    <name type="ordered locus">SH0723</name>
</gene>
<feature type="chain" id="PRO_0000173774" description="Formimidoylglutamase">
    <location>
        <begin position="1"/>
        <end position="311"/>
    </location>
</feature>
<feature type="binding site" evidence="1">
    <location>
        <position position="130"/>
    </location>
    <ligand>
        <name>Mn(2+)</name>
        <dbReference type="ChEBI" id="CHEBI:29035"/>
        <label>1</label>
    </ligand>
</feature>
<feature type="binding site" evidence="1">
    <location>
        <position position="155"/>
    </location>
    <ligand>
        <name>Mn(2+)</name>
        <dbReference type="ChEBI" id="CHEBI:29035"/>
        <label>1</label>
    </ligand>
</feature>
<feature type="binding site" evidence="1">
    <location>
        <position position="155"/>
    </location>
    <ligand>
        <name>Mn(2+)</name>
        <dbReference type="ChEBI" id="CHEBI:29035"/>
        <label>2</label>
    </ligand>
</feature>
<feature type="binding site" evidence="1">
    <location>
        <position position="157"/>
    </location>
    <ligand>
        <name>Mn(2+)</name>
        <dbReference type="ChEBI" id="CHEBI:29035"/>
        <label>2</label>
    </ligand>
</feature>
<feature type="binding site" evidence="1">
    <location>
        <position position="159"/>
    </location>
    <ligand>
        <name>Mn(2+)</name>
        <dbReference type="ChEBI" id="CHEBI:29035"/>
        <label>1</label>
    </ligand>
</feature>
<feature type="binding site" evidence="1">
    <location>
        <position position="242"/>
    </location>
    <ligand>
        <name>Mn(2+)</name>
        <dbReference type="ChEBI" id="CHEBI:29035"/>
        <label>1</label>
    </ligand>
</feature>
<feature type="binding site" evidence="1">
    <location>
        <position position="242"/>
    </location>
    <ligand>
        <name>Mn(2+)</name>
        <dbReference type="ChEBI" id="CHEBI:29035"/>
        <label>2</label>
    </ligand>
</feature>
<feature type="binding site" evidence="1">
    <location>
        <position position="244"/>
    </location>
    <ligand>
        <name>Mn(2+)</name>
        <dbReference type="ChEBI" id="CHEBI:29035"/>
        <label>2</label>
    </ligand>
</feature>